<accession>Q9D8S4</accession>
<gene>
    <name type="primary">Rexo2</name>
    <name type="synonym">Smfn</name>
</gene>
<organism>
    <name type="scientific">Mus musculus</name>
    <name type="common">Mouse</name>
    <dbReference type="NCBI Taxonomy" id="10090"/>
    <lineage>
        <taxon>Eukaryota</taxon>
        <taxon>Metazoa</taxon>
        <taxon>Chordata</taxon>
        <taxon>Craniata</taxon>
        <taxon>Vertebrata</taxon>
        <taxon>Euteleostomi</taxon>
        <taxon>Mammalia</taxon>
        <taxon>Eutheria</taxon>
        <taxon>Euarchontoglires</taxon>
        <taxon>Glires</taxon>
        <taxon>Rodentia</taxon>
        <taxon>Myomorpha</taxon>
        <taxon>Muroidea</taxon>
        <taxon>Muridae</taxon>
        <taxon>Murinae</taxon>
        <taxon>Mus</taxon>
        <taxon>Mus</taxon>
    </lineage>
</organism>
<name>ORN_MOUSE</name>
<dbReference type="EC" id="3.1.15.-"/>
<dbReference type="EMBL" id="AK007731">
    <property type="protein sequence ID" value="BAB25219.2"/>
    <property type="molecule type" value="mRNA"/>
</dbReference>
<dbReference type="CCDS" id="CCDS23154.1"/>
<dbReference type="RefSeq" id="NP_077195.2">
    <property type="nucleotide sequence ID" value="NM_024233.3"/>
</dbReference>
<dbReference type="SMR" id="Q9D8S4"/>
<dbReference type="BioGRID" id="222638">
    <property type="interactions" value="2"/>
</dbReference>
<dbReference type="FunCoup" id="Q9D8S4">
    <property type="interactions" value="3323"/>
</dbReference>
<dbReference type="STRING" id="10090.ENSMUSP00000034524"/>
<dbReference type="GlyGen" id="Q9D8S4">
    <property type="glycosylation" value="1 site, 1 O-linked glycan (1 site)"/>
</dbReference>
<dbReference type="iPTMnet" id="Q9D8S4"/>
<dbReference type="PhosphoSitePlus" id="Q9D8S4"/>
<dbReference type="jPOST" id="Q9D8S4"/>
<dbReference type="PaxDb" id="10090-ENSMUSP00000034524"/>
<dbReference type="PeptideAtlas" id="Q9D8S4"/>
<dbReference type="ProteomicsDB" id="294222"/>
<dbReference type="Pumba" id="Q9D8S4"/>
<dbReference type="Antibodypedia" id="32246">
    <property type="antibodies" value="169 antibodies from 24 providers"/>
</dbReference>
<dbReference type="DNASU" id="104444"/>
<dbReference type="Ensembl" id="ENSMUST00000034524.5">
    <property type="protein sequence ID" value="ENSMUSP00000034524.4"/>
    <property type="gene ID" value="ENSMUSG00000032026.8"/>
</dbReference>
<dbReference type="GeneID" id="104444"/>
<dbReference type="KEGG" id="mmu:104444"/>
<dbReference type="UCSC" id="uc009pia.1">
    <property type="organism name" value="mouse"/>
</dbReference>
<dbReference type="AGR" id="MGI:1888981"/>
<dbReference type="CTD" id="25996"/>
<dbReference type="MGI" id="MGI:1888981">
    <property type="gene designation" value="Rexo2"/>
</dbReference>
<dbReference type="VEuPathDB" id="HostDB:ENSMUSG00000032026"/>
<dbReference type="eggNOG" id="KOG3242">
    <property type="taxonomic scope" value="Eukaryota"/>
</dbReference>
<dbReference type="GeneTree" id="ENSGT00390000009255"/>
<dbReference type="HOGENOM" id="CLU_064761_1_1_1"/>
<dbReference type="InParanoid" id="Q9D8S4"/>
<dbReference type="OMA" id="AFFHYRN"/>
<dbReference type="OrthoDB" id="270189at2759"/>
<dbReference type="PhylomeDB" id="Q9D8S4"/>
<dbReference type="TreeFam" id="TF314084"/>
<dbReference type="BioGRID-ORCS" id="104444">
    <property type="hits" value="4 hits in 79 CRISPR screens"/>
</dbReference>
<dbReference type="PRO" id="PR:Q9D8S4"/>
<dbReference type="Proteomes" id="UP000000589">
    <property type="component" value="Chromosome 9"/>
</dbReference>
<dbReference type="RNAct" id="Q9D8S4">
    <property type="molecule type" value="protein"/>
</dbReference>
<dbReference type="Bgee" id="ENSMUSG00000032026">
    <property type="expression patterns" value="Expressed in lacrimal gland and 262 other cell types or tissues"/>
</dbReference>
<dbReference type="ExpressionAtlas" id="Q9D8S4">
    <property type="expression patterns" value="baseline and differential"/>
</dbReference>
<dbReference type="GO" id="GO:0005925">
    <property type="term" value="C:focal adhesion"/>
    <property type="evidence" value="ECO:0007669"/>
    <property type="project" value="Ensembl"/>
</dbReference>
<dbReference type="GO" id="GO:0005758">
    <property type="term" value="C:mitochondrial intermembrane space"/>
    <property type="evidence" value="ECO:0000250"/>
    <property type="project" value="UniProtKB"/>
</dbReference>
<dbReference type="GO" id="GO:0005759">
    <property type="term" value="C:mitochondrial matrix"/>
    <property type="evidence" value="ECO:0000250"/>
    <property type="project" value="UniProtKB"/>
</dbReference>
<dbReference type="GO" id="GO:0005739">
    <property type="term" value="C:mitochondrion"/>
    <property type="evidence" value="ECO:0007005"/>
    <property type="project" value="MGI"/>
</dbReference>
<dbReference type="GO" id="GO:0005730">
    <property type="term" value="C:nucleolus"/>
    <property type="evidence" value="ECO:0007669"/>
    <property type="project" value="Ensembl"/>
</dbReference>
<dbReference type="GO" id="GO:0005634">
    <property type="term" value="C:nucleus"/>
    <property type="evidence" value="ECO:0000250"/>
    <property type="project" value="UniProtKB"/>
</dbReference>
<dbReference type="GO" id="GO:0008408">
    <property type="term" value="F:3'-5' exonuclease activity"/>
    <property type="evidence" value="ECO:0000250"/>
    <property type="project" value="UniProtKB"/>
</dbReference>
<dbReference type="GO" id="GO:0008296">
    <property type="term" value="F:3'-5'-DNA exonuclease activity"/>
    <property type="evidence" value="ECO:0000250"/>
    <property type="project" value="UniProtKB"/>
</dbReference>
<dbReference type="GO" id="GO:0000175">
    <property type="term" value="F:3'-5'-RNA exonuclease activity"/>
    <property type="evidence" value="ECO:0007669"/>
    <property type="project" value="Ensembl"/>
</dbReference>
<dbReference type="GO" id="GO:0000287">
    <property type="term" value="F:magnesium ion binding"/>
    <property type="evidence" value="ECO:0000250"/>
    <property type="project" value="UniProtKB"/>
</dbReference>
<dbReference type="GO" id="GO:0003676">
    <property type="term" value="F:nucleic acid binding"/>
    <property type="evidence" value="ECO:0007669"/>
    <property type="project" value="InterPro"/>
</dbReference>
<dbReference type="GO" id="GO:0006139">
    <property type="term" value="P:nucleobase-containing compound metabolic process"/>
    <property type="evidence" value="ECO:0000266"/>
    <property type="project" value="MGI"/>
</dbReference>
<dbReference type="CDD" id="cd06135">
    <property type="entry name" value="Orn"/>
    <property type="match status" value="1"/>
</dbReference>
<dbReference type="FunFam" id="3.30.420.10:FF:000003">
    <property type="entry name" value="Oligoribonuclease"/>
    <property type="match status" value="1"/>
</dbReference>
<dbReference type="Gene3D" id="3.30.420.10">
    <property type="entry name" value="Ribonuclease H-like superfamily/Ribonuclease H"/>
    <property type="match status" value="1"/>
</dbReference>
<dbReference type="HAMAP" id="MF_00045">
    <property type="entry name" value="Oligoribonuclease"/>
    <property type="match status" value="1"/>
</dbReference>
<dbReference type="InterPro" id="IPR013520">
    <property type="entry name" value="Exonuclease_RNaseT/DNA_pol3"/>
</dbReference>
<dbReference type="InterPro" id="IPR022894">
    <property type="entry name" value="Oligoribonuclease"/>
</dbReference>
<dbReference type="InterPro" id="IPR012337">
    <property type="entry name" value="RNaseH-like_sf"/>
</dbReference>
<dbReference type="InterPro" id="IPR036397">
    <property type="entry name" value="RNaseH_sf"/>
</dbReference>
<dbReference type="NCBIfam" id="NF003765">
    <property type="entry name" value="PRK05359.1"/>
    <property type="match status" value="1"/>
</dbReference>
<dbReference type="PANTHER" id="PTHR11046">
    <property type="entry name" value="OLIGORIBONUCLEASE, MITOCHONDRIAL"/>
    <property type="match status" value="1"/>
</dbReference>
<dbReference type="PANTHER" id="PTHR11046:SF0">
    <property type="entry name" value="OLIGORIBONUCLEASE, MITOCHONDRIAL"/>
    <property type="match status" value="1"/>
</dbReference>
<dbReference type="Pfam" id="PF00929">
    <property type="entry name" value="RNase_T"/>
    <property type="match status" value="1"/>
</dbReference>
<dbReference type="SMART" id="SM00479">
    <property type="entry name" value="EXOIII"/>
    <property type="match status" value="1"/>
</dbReference>
<dbReference type="SUPFAM" id="SSF53098">
    <property type="entry name" value="Ribonuclease H-like"/>
    <property type="match status" value="1"/>
</dbReference>
<reference key="1">
    <citation type="journal article" date="2005" name="Science">
        <title>The transcriptional landscape of the mammalian genome.</title>
        <authorList>
            <person name="Carninci P."/>
            <person name="Kasukawa T."/>
            <person name="Katayama S."/>
            <person name="Gough J."/>
            <person name="Frith M.C."/>
            <person name="Maeda N."/>
            <person name="Oyama R."/>
            <person name="Ravasi T."/>
            <person name="Lenhard B."/>
            <person name="Wells C."/>
            <person name="Kodzius R."/>
            <person name="Shimokawa K."/>
            <person name="Bajic V.B."/>
            <person name="Brenner S.E."/>
            <person name="Batalov S."/>
            <person name="Forrest A.R."/>
            <person name="Zavolan M."/>
            <person name="Davis M.J."/>
            <person name="Wilming L.G."/>
            <person name="Aidinis V."/>
            <person name="Allen J.E."/>
            <person name="Ambesi-Impiombato A."/>
            <person name="Apweiler R."/>
            <person name="Aturaliya R.N."/>
            <person name="Bailey T.L."/>
            <person name="Bansal M."/>
            <person name="Baxter L."/>
            <person name="Beisel K.W."/>
            <person name="Bersano T."/>
            <person name="Bono H."/>
            <person name="Chalk A.M."/>
            <person name="Chiu K.P."/>
            <person name="Choudhary V."/>
            <person name="Christoffels A."/>
            <person name="Clutterbuck D.R."/>
            <person name="Crowe M.L."/>
            <person name="Dalla E."/>
            <person name="Dalrymple B.P."/>
            <person name="de Bono B."/>
            <person name="Della Gatta G."/>
            <person name="di Bernardo D."/>
            <person name="Down T."/>
            <person name="Engstrom P."/>
            <person name="Fagiolini M."/>
            <person name="Faulkner G."/>
            <person name="Fletcher C.F."/>
            <person name="Fukushima T."/>
            <person name="Furuno M."/>
            <person name="Futaki S."/>
            <person name="Gariboldi M."/>
            <person name="Georgii-Hemming P."/>
            <person name="Gingeras T.R."/>
            <person name="Gojobori T."/>
            <person name="Green R.E."/>
            <person name="Gustincich S."/>
            <person name="Harbers M."/>
            <person name="Hayashi Y."/>
            <person name="Hensch T.K."/>
            <person name="Hirokawa N."/>
            <person name="Hill D."/>
            <person name="Huminiecki L."/>
            <person name="Iacono M."/>
            <person name="Ikeo K."/>
            <person name="Iwama A."/>
            <person name="Ishikawa T."/>
            <person name="Jakt M."/>
            <person name="Kanapin A."/>
            <person name="Katoh M."/>
            <person name="Kawasawa Y."/>
            <person name="Kelso J."/>
            <person name="Kitamura H."/>
            <person name="Kitano H."/>
            <person name="Kollias G."/>
            <person name="Krishnan S.P."/>
            <person name="Kruger A."/>
            <person name="Kummerfeld S.K."/>
            <person name="Kurochkin I.V."/>
            <person name="Lareau L.F."/>
            <person name="Lazarevic D."/>
            <person name="Lipovich L."/>
            <person name="Liu J."/>
            <person name="Liuni S."/>
            <person name="McWilliam S."/>
            <person name="Madan Babu M."/>
            <person name="Madera M."/>
            <person name="Marchionni L."/>
            <person name="Matsuda H."/>
            <person name="Matsuzawa S."/>
            <person name="Miki H."/>
            <person name="Mignone F."/>
            <person name="Miyake S."/>
            <person name="Morris K."/>
            <person name="Mottagui-Tabar S."/>
            <person name="Mulder N."/>
            <person name="Nakano N."/>
            <person name="Nakauchi H."/>
            <person name="Ng P."/>
            <person name="Nilsson R."/>
            <person name="Nishiguchi S."/>
            <person name="Nishikawa S."/>
            <person name="Nori F."/>
            <person name="Ohara O."/>
            <person name="Okazaki Y."/>
            <person name="Orlando V."/>
            <person name="Pang K.C."/>
            <person name="Pavan W.J."/>
            <person name="Pavesi G."/>
            <person name="Pesole G."/>
            <person name="Petrovsky N."/>
            <person name="Piazza S."/>
            <person name="Reed J."/>
            <person name="Reid J.F."/>
            <person name="Ring B.Z."/>
            <person name="Ringwald M."/>
            <person name="Rost B."/>
            <person name="Ruan Y."/>
            <person name="Salzberg S.L."/>
            <person name="Sandelin A."/>
            <person name="Schneider C."/>
            <person name="Schoenbach C."/>
            <person name="Sekiguchi K."/>
            <person name="Semple C.A."/>
            <person name="Seno S."/>
            <person name="Sessa L."/>
            <person name="Sheng Y."/>
            <person name="Shibata Y."/>
            <person name="Shimada H."/>
            <person name="Shimada K."/>
            <person name="Silva D."/>
            <person name="Sinclair B."/>
            <person name="Sperling S."/>
            <person name="Stupka E."/>
            <person name="Sugiura K."/>
            <person name="Sultana R."/>
            <person name="Takenaka Y."/>
            <person name="Taki K."/>
            <person name="Tammoja K."/>
            <person name="Tan S.L."/>
            <person name="Tang S."/>
            <person name="Taylor M.S."/>
            <person name="Tegner J."/>
            <person name="Teichmann S.A."/>
            <person name="Ueda H.R."/>
            <person name="van Nimwegen E."/>
            <person name="Verardo R."/>
            <person name="Wei C.L."/>
            <person name="Yagi K."/>
            <person name="Yamanishi H."/>
            <person name="Zabarovsky E."/>
            <person name="Zhu S."/>
            <person name="Zimmer A."/>
            <person name="Hide W."/>
            <person name="Bult C."/>
            <person name="Grimmond S.M."/>
            <person name="Teasdale R.D."/>
            <person name="Liu E.T."/>
            <person name="Brusic V."/>
            <person name="Quackenbush J."/>
            <person name="Wahlestedt C."/>
            <person name="Mattick J.S."/>
            <person name="Hume D.A."/>
            <person name="Kai C."/>
            <person name="Sasaki D."/>
            <person name="Tomaru Y."/>
            <person name="Fukuda S."/>
            <person name="Kanamori-Katayama M."/>
            <person name="Suzuki M."/>
            <person name="Aoki J."/>
            <person name="Arakawa T."/>
            <person name="Iida J."/>
            <person name="Imamura K."/>
            <person name="Itoh M."/>
            <person name="Kato T."/>
            <person name="Kawaji H."/>
            <person name="Kawagashira N."/>
            <person name="Kawashima T."/>
            <person name="Kojima M."/>
            <person name="Kondo S."/>
            <person name="Konno H."/>
            <person name="Nakano K."/>
            <person name="Ninomiya N."/>
            <person name="Nishio T."/>
            <person name="Okada M."/>
            <person name="Plessy C."/>
            <person name="Shibata K."/>
            <person name="Shiraki T."/>
            <person name="Suzuki S."/>
            <person name="Tagami M."/>
            <person name="Waki K."/>
            <person name="Watahiki A."/>
            <person name="Okamura-Oho Y."/>
            <person name="Suzuki H."/>
            <person name="Kawai J."/>
            <person name="Hayashizaki Y."/>
        </authorList>
    </citation>
    <scope>NUCLEOTIDE SEQUENCE [LARGE SCALE MRNA]</scope>
    <source>
        <strain>C57BL/6J</strain>
        <tissue>Pancreas</tissue>
    </source>
</reference>
<reference key="2">
    <citation type="journal article" date="2010" name="Cell">
        <title>A tissue-specific atlas of mouse protein phosphorylation and expression.</title>
        <authorList>
            <person name="Huttlin E.L."/>
            <person name="Jedrychowski M.P."/>
            <person name="Elias J.E."/>
            <person name="Goswami T."/>
            <person name="Rad R."/>
            <person name="Beausoleil S.A."/>
            <person name="Villen J."/>
            <person name="Haas W."/>
            <person name="Sowa M.E."/>
            <person name="Gygi S.P."/>
        </authorList>
    </citation>
    <scope>IDENTIFICATION BY MASS SPECTROMETRY [LARGE SCALE ANALYSIS]</scope>
    <source>
        <tissue>Brain</tissue>
        <tissue>Brown adipose tissue</tissue>
        <tissue>Heart</tissue>
        <tissue>Liver</tissue>
        <tissue>Lung</tissue>
        <tissue>Pancreas</tissue>
        <tissue>Spleen</tissue>
        <tissue>Testis</tissue>
    </source>
</reference>
<reference key="3">
    <citation type="journal article" date="2013" name="Proc. Natl. Acad. Sci. U.S.A.">
        <title>Label-free quantitative proteomics of the lysine acetylome in mitochondria identifies substrates of SIRT3 in metabolic pathways.</title>
        <authorList>
            <person name="Rardin M.J."/>
            <person name="Newman J.C."/>
            <person name="Held J.M."/>
            <person name="Cusack M.P."/>
            <person name="Sorensen D.J."/>
            <person name="Li B."/>
            <person name="Schilling B."/>
            <person name="Mooney S.D."/>
            <person name="Kahn C.R."/>
            <person name="Verdin E."/>
            <person name="Gibson B.W."/>
        </authorList>
    </citation>
    <scope>ACETYLATION [LARGE SCALE ANALYSIS] AT LYS-173</scope>
    <scope>IDENTIFICATION BY MASS SPECTROMETRY [LARGE SCALE ANALYSIS]</scope>
    <source>
        <tissue>Liver</tissue>
    </source>
</reference>
<reference key="4">
    <citation type="journal article" date="2019" name="Mol. Cell">
        <title>Dinucleotide Degradation by REXO2 Maintains Promoter Specificity in Mammalian Mitochondria.</title>
        <authorList>
            <person name="Nicholls T.J."/>
            <person name="Spahr H."/>
            <person name="Jiang S."/>
            <person name="Siira S.J."/>
            <person name="Koolmeister C."/>
            <person name="Sharma S."/>
            <person name="Kauppila J.H.K."/>
            <person name="Jiang M."/>
            <person name="Kaever V."/>
            <person name="Rackham O."/>
            <person name="Chabes A."/>
            <person name="Falkenberg M."/>
            <person name="Filipovska A."/>
            <person name="Larsson N.G."/>
            <person name="Gustafsson C.M."/>
        </authorList>
    </citation>
    <scope>FUNCTION</scope>
    <scope>DISRUPTION PHENOTYPE</scope>
</reference>
<sequence length="237" mass="26739">MLGVSLGARLLRGVGGRRGQFGARGVSEGSAAMAAGESMAQRMVWVDLEMTGLDIEKDQIIEMACLITDSDLNILAEGPNLIIKQPDELLDSMSDWCKEHHGKSGLTKAVKESTVTLQQAEYEFLSFVRQQTPPGLCPLAGNSVHADKKFLDKHMPQFMKHLHYRIIDVSTVKELCRRWYPEDYEFAPKKAASHRALDDISESIKELQFYRNNIFKKKTDEKKRKIIENGETEKPVS</sequence>
<comment type="function">
    <text evidence="1 3">3'-to-5'exoribonuclease that preferentially degrades DNA and RNA oligonucleotides composed of only two nucleotides (PubMed:31588022). Binds and degrades longer oligonucleotides with a lower affinity (By similarity). Plays dual roles in mitochondria, scavenging nanoRNAs (small RNA oligonucleotides of &lt;5 nucleotides) that are produced by the degradosome and clearing short RNAs that are generated by RNA processing (By similarity). Essential for correct initiation of mitochondrial transcription, degrading mitochondrial RNA dinucleotides to prevent RNA-primed transcription at non-canonical sites in the mitochondrial genome (PubMed:31588022). Essential for embryonic development (PubMed:31588022).</text>
</comment>
<comment type="cofactor">
    <cofactor evidence="1">
        <name>Mn(2+)</name>
        <dbReference type="ChEBI" id="CHEBI:29035"/>
    </cofactor>
    <cofactor evidence="1">
        <name>Mg(2+)</name>
        <dbReference type="ChEBI" id="CHEBI:18420"/>
    </cofactor>
</comment>
<comment type="subunit">
    <text evidence="1">Homodimer (By similarity). Homotetramer (By similarity).</text>
</comment>
<comment type="subcellular location">
    <subcellularLocation>
        <location evidence="1">Mitochondrion intermembrane space</location>
    </subcellularLocation>
    <subcellularLocation>
        <location evidence="1">Mitochondrion matrix</location>
    </subcellularLocation>
    <subcellularLocation>
        <location evidence="1">Mitochondrion</location>
    </subcellularLocation>
    <subcellularLocation>
        <location evidence="1">Cytoplasm</location>
    </subcellularLocation>
    <subcellularLocation>
        <location evidence="1">Nucleus</location>
    </subcellularLocation>
</comment>
<comment type="disruption phenotype">
    <text evidence="3">Causes embryonic lethality before E8.5 (PubMed:31588022). Heart- and skeletal-muscle-specific knockout mice show elevated concentrations of the RNA dinucleotide pApA in the mitochondria purified from the heart (PubMed:31588022).</text>
</comment>
<comment type="similarity">
    <text evidence="4">Belongs to the oligoribonuclease family.</text>
</comment>
<protein>
    <recommendedName>
        <fullName>Oligoribonuclease, mitochondrial</fullName>
        <ecNumber>3.1.15.-</ecNumber>
    </recommendedName>
    <alternativeName>
        <fullName>RNA exonuclease 2 homolog</fullName>
    </alternativeName>
    <alternativeName>
        <fullName>Small fragment nuclease</fullName>
    </alternativeName>
</protein>
<evidence type="ECO:0000250" key="1">
    <source>
        <dbReference type="UniProtKB" id="Q9Y3B8"/>
    </source>
</evidence>
<evidence type="ECO:0000255" key="2"/>
<evidence type="ECO:0000269" key="3">
    <source>
    </source>
</evidence>
<evidence type="ECO:0000305" key="4"/>
<evidence type="ECO:0007744" key="5">
    <source>
    </source>
</evidence>
<proteinExistence type="evidence at protein level"/>
<feature type="transit peptide" description="Mitochondrion" evidence="2">
    <location>
        <begin position="1"/>
        <end position="25"/>
    </location>
</feature>
<feature type="chain" id="PRO_0000041951" description="Oligoribonuclease, mitochondrial">
    <location>
        <begin position="26"/>
        <end position="237"/>
    </location>
</feature>
<feature type="domain" description="Exonuclease">
    <location>
        <begin position="43"/>
        <end position="207"/>
    </location>
</feature>
<feature type="active site" evidence="1">
    <location>
        <position position="194"/>
    </location>
</feature>
<feature type="binding site" evidence="1">
    <location>
        <position position="47"/>
    </location>
    <ligand>
        <name>Mg(2+)</name>
        <dbReference type="ChEBI" id="CHEBI:18420"/>
        <label>1</label>
    </ligand>
</feature>
<feature type="binding site" evidence="1">
    <location>
        <position position="47"/>
    </location>
    <ligand>
        <name>Mg(2+)</name>
        <dbReference type="ChEBI" id="CHEBI:18420"/>
        <label>2</label>
    </ligand>
</feature>
<feature type="binding site" evidence="1">
    <location>
        <position position="49"/>
    </location>
    <ligand>
        <name>Mg(2+)</name>
        <dbReference type="ChEBI" id="CHEBI:18420"/>
        <label>1</label>
    </ligand>
</feature>
<feature type="binding site" evidence="1">
    <location>
        <position position="147"/>
    </location>
    <ligand>
        <name>Mg(2+)</name>
        <dbReference type="ChEBI" id="CHEBI:18420"/>
        <label>2</label>
    </ligand>
</feature>
<feature type="binding site" evidence="1">
    <location>
        <position position="199"/>
    </location>
    <ligand>
        <name>Mg(2+)</name>
        <dbReference type="ChEBI" id="CHEBI:18420"/>
        <label>1</label>
    </ligand>
</feature>
<feature type="site" description="Important for dinucleotide binding" evidence="1">
    <location>
        <position position="53"/>
    </location>
</feature>
<feature type="site" description="Important for dinucleotide binding" evidence="1">
    <location>
        <position position="96"/>
    </location>
</feature>
<feature type="site" description="Important for dinucleotide binding" evidence="1">
    <location>
        <position position="164"/>
    </location>
</feature>
<feature type="modified residue" description="Phosphoserine" evidence="1">
    <location>
        <position position="92"/>
    </location>
</feature>
<feature type="modified residue" description="Phosphotyrosine" evidence="1">
    <location>
        <position position="122"/>
    </location>
</feature>
<feature type="modified residue" description="N6-acetyllysine" evidence="5">
    <location>
        <position position="173"/>
    </location>
</feature>
<keyword id="KW-0007">Acetylation</keyword>
<keyword id="KW-0963">Cytoplasm</keyword>
<keyword id="KW-0269">Exonuclease</keyword>
<keyword id="KW-0378">Hydrolase</keyword>
<keyword id="KW-0460">Magnesium</keyword>
<keyword id="KW-0464">Manganese</keyword>
<keyword id="KW-0479">Metal-binding</keyword>
<keyword id="KW-0496">Mitochondrion</keyword>
<keyword id="KW-0540">Nuclease</keyword>
<keyword id="KW-0539">Nucleus</keyword>
<keyword id="KW-0597">Phosphoprotein</keyword>
<keyword id="KW-1185">Reference proteome</keyword>
<keyword id="KW-0809">Transit peptide</keyword>